<name>SEPF_STAA2</name>
<organism>
    <name type="scientific">Staphylococcus aureus (strain JH1)</name>
    <dbReference type="NCBI Taxonomy" id="359787"/>
    <lineage>
        <taxon>Bacteria</taxon>
        <taxon>Bacillati</taxon>
        <taxon>Bacillota</taxon>
        <taxon>Bacilli</taxon>
        <taxon>Bacillales</taxon>
        <taxon>Staphylococcaceae</taxon>
        <taxon>Staphylococcus</taxon>
    </lineage>
</organism>
<gene>
    <name evidence="1" type="primary">sepF</name>
    <name type="ordered locus">SaurJH1_1273</name>
</gene>
<dbReference type="EMBL" id="CP000736">
    <property type="protein sequence ID" value="ABR52127.1"/>
    <property type="molecule type" value="Genomic_DNA"/>
</dbReference>
<dbReference type="SMR" id="A6U109"/>
<dbReference type="KEGG" id="sah:SaurJH1_1273"/>
<dbReference type="HOGENOM" id="CLU_078499_4_1_9"/>
<dbReference type="GO" id="GO:0005737">
    <property type="term" value="C:cytoplasm"/>
    <property type="evidence" value="ECO:0007669"/>
    <property type="project" value="UniProtKB-SubCell"/>
</dbReference>
<dbReference type="GO" id="GO:0000917">
    <property type="term" value="P:division septum assembly"/>
    <property type="evidence" value="ECO:0007669"/>
    <property type="project" value="UniProtKB-KW"/>
</dbReference>
<dbReference type="GO" id="GO:0043093">
    <property type="term" value="P:FtsZ-dependent cytokinesis"/>
    <property type="evidence" value="ECO:0007669"/>
    <property type="project" value="UniProtKB-UniRule"/>
</dbReference>
<dbReference type="Gene3D" id="3.30.110.150">
    <property type="entry name" value="SepF-like protein"/>
    <property type="match status" value="1"/>
</dbReference>
<dbReference type="HAMAP" id="MF_01197">
    <property type="entry name" value="SepF"/>
    <property type="match status" value="1"/>
</dbReference>
<dbReference type="InterPro" id="IPR023052">
    <property type="entry name" value="Cell_div_SepF"/>
</dbReference>
<dbReference type="InterPro" id="IPR007561">
    <property type="entry name" value="Cell_div_SepF/SepF-rel"/>
</dbReference>
<dbReference type="InterPro" id="IPR038594">
    <property type="entry name" value="SepF-like_sf"/>
</dbReference>
<dbReference type="PANTHER" id="PTHR35798">
    <property type="entry name" value="CELL DIVISION PROTEIN SEPF"/>
    <property type="match status" value="1"/>
</dbReference>
<dbReference type="PANTHER" id="PTHR35798:SF1">
    <property type="entry name" value="CELL DIVISION PROTEIN SEPF"/>
    <property type="match status" value="1"/>
</dbReference>
<dbReference type="Pfam" id="PF04472">
    <property type="entry name" value="SepF"/>
    <property type="match status" value="1"/>
</dbReference>
<keyword id="KW-0131">Cell cycle</keyword>
<keyword id="KW-0132">Cell division</keyword>
<keyword id="KW-0963">Cytoplasm</keyword>
<keyword id="KW-0717">Septation</keyword>
<accession>A6U109</accession>
<reference key="1">
    <citation type="submission" date="2007-06" db="EMBL/GenBank/DDBJ databases">
        <title>Complete sequence of chromosome of Staphylococcus aureus subsp. aureus JH1.</title>
        <authorList>
            <consortium name="US DOE Joint Genome Institute"/>
            <person name="Copeland A."/>
            <person name="Lucas S."/>
            <person name="Lapidus A."/>
            <person name="Barry K."/>
            <person name="Detter J.C."/>
            <person name="Glavina del Rio T."/>
            <person name="Hammon N."/>
            <person name="Israni S."/>
            <person name="Dalin E."/>
            <person name="Tice H."/>
            <person name="Pitluck S."/>
            <person name="Chain P."/>
            <person name="Malfatti S."/>
            <person name="Shin M."/>
            <person name="Vergez L."/>
            <person name="Schmutz J."/>
            <person name="Larimer F."/>
            <person name="Land M."/>
            <person name="Hauser L."/>
            <person name="Kyrpides N."/>
            <person name="Ivanova N."/>
            <person name="Tomasz A."/>
            <person name="Richardson P."/>
        </authorList>
    </citation>
    <scope>NUCLEOTIDE SEQUENCE [LARGE SCALE GENOMIC DNA]</scope>
    <source>
        <strain>JH1</strain>
    </source>
</reference>
<protein>
    <recommendedName>
        <fullName evidence="1">Cell division protein SepF</fullName>
    </recommendedName>
</protein>
<sequence length="187" mass="21023">MSHLALKDLFSGFFVIDDEEEVEVPDKQQQVNEAPAKEQSQQTTKQNAIKSVPQKSASRYTTTSEERNNRMSNYSKNNSRNVVTMNNATPNNASQESSKMCLFEPRVFSDTQDIADELKNRRATLVNLQRIDKVSAKRIIDFLSGTVYAIGGDIQRVGTDIFLCTPDNVEVAGSITDHIENMEHSFD</sequence>
<proteinExistence type="inferred from homology"/>
<comment type="function">
    <text evidence="1">Cell division protein that is part of the divisome complex and is recruited early to the Z-ring. Probably stimulates Z-ring formation, perhaps through the cross-linking of FtsZ protofilaments. Its function overlaps with FtsA.</text>
</comment>
<comment type="subunit">
    <text evidence="1">Homodimer. Interacts with FtsZ.</text>
</comment>
<comment type="subcellular location">
    <subcellularLocation>
        <location evidence="1">Cytoplasm</location>
    </subcellularLocation>
    <text evidence="1">Localizes to the division site, in a FtsZ-dependent manner.</text>
</comment>
<comment type="similarity">
    <text evidence="1">Belongs to the SepF family.</text>
</comment>
<feature type="chain" id="PRO_0000334076" description="Cell division protein SepF">
    <location>
        <begin position="1"/>
        <end position="187"/>
    </location>
</feature>
<feature type="region of interest" description="Disordered" evidence="2">
    <location>
        <begin position="21"/>
        <end position="97"/>
    </location>
</feature>
<feature type="compositionally biased region" description="Polar residues" evidence="2">
    <location>
        <begin position="38"/>
        <end position="63"/>
    </location>
</feature>
<feature type="compositionally biased region" description="Polar residues" evidence="2">
    <location>
        <begin position="70"/>
        <end position="97"/>
    </location>
</feature>
<evidence type="ECO:0000255" key="1">
    <source>
        <dbReference type="HAMAP-Rule" id="MF_01197"/>
    </source>
</evidence>
<evidence type="ECO:0000256" key="2">
    <source>
        <dbReference type="SAM" id="MobiDB-lite"/>
    </source>
</evidence>